<reference key="1">
    <citation type="journal article" date="2009" name="PLoS Pathog.">
        <title>Genomic evidence for the evolution of Streptococcus equi: host restriction, increased virulence, and genetic exchange with human pathogens.</title>
        <authorList>
            <person name="Holden M.T.G."/>
            <person name="Heather Z."/>
            <person name="Paillot R."/>
            <person name="Steward K.F."/>
            <person name="Webb K."/>
            <person name="Ainslie F."/>
            <person name="Jourdan T."/>
            <person name="Bason N.C."/>
            <person name="Holroyd N.E."/>
            <person name="Mungall K."/>
            <person name="Quail M.A."/>
            <person name="Sanders M."/>
            <person name="Simmonds M."/>
            <person name="Willey D."/>
            <person name="Brooks K."/>
            <person name="Aanensen D.M."/>
            <person name="Spratt B.G."/>
            <person name="Jolley K.A."/>
            <person name="Maiden M.C.J."/>
            <person name="Kehoe M."/>
            <person name="Chanter N."/>
            <person name="Bentley S.D."/>
            <person name="Robinson C."/>
            <person name="Maskell D.J."/>
            <person name="Parkhill J."/>
            <person name="Waller A.S."/>
        </authorList>
    </citation>
    <scope>NUCLEOTIDE SEQUENCE [LARGE SCALE GENOMIC DNA]</scope>
    <source>
        <strain>4047</strain>
    </source>
</reference>
<evidence type="ECO:0000255" key="1">
    <source>
        <dbReference type="HAMAP-Rule" id="MF_00122"/>
    </source>
</evidence>
<gene>
    <name evidence="1" type="primary">gatC</name>
    <name type="ordered locus">SEQ_0461</name>
</gene>
<proteinExistence type="inferred from homology"/>
<comment type="function">
    <text evidence="1">Allows the formation of correctly charged Asn-tRNA(Asn) or Gln-tRNA(Gln) through the transamidation of misacylated Asp-tRNA(Asn) or Glu-tRNA(Gln) in organisms which lack either or both of asparaginyl-tRNA or glutaminyl-tRNA synthetases. The reaction takes place in the presence of glutamine and ATP through an activated phospho-Asp-tRNA(Asn) or phospho-Glu-tRNA(Gln).</text>
</comment>
<comment type="catalytic activity">
    <reaction evidence="1">
        <text>L-glutamyl-tRNA(Gln) + L-glutamine + ATP + H2O = L-glutaminyl-tRNA(Gln) + L-glutamate + ADP + phosphate + H(+)</text>
        <dbReference type="Rhea" id="RHEA:17521"/>
        <dbReference type="Rhea" id="RHEA-COMP:9681"/>
        <dbReference type="Rhea" id="RHEA-COMP:9684"/>
        <dbReference type="ChEBI" id="CHEBI:15377"/>
        <dbReference type="ChEBI" id="CHEBI:15378"/>
        <dbReference type="ChEBI" id="CHEBI:29985"/>
        <dbReference type="ChEBI" id="CHEBI:30616"/>
        <dbReference type="ChEBI" id="CHEBI:43474"/>
        <dbReference type="ChEBI" id="CHEBI:58359"/>
        <dbReference type="ChEBI" id="CHEBI:78520"/>
        <dbReference type="ChEBI" id="CHEBI:78521"/>
        <dbReference type="ChEBI" id="CHEBI:456216"/>
    </reaction>
</comment>
<comment type="catalytic activity">
    <reaction evidence="1">
        <text>L-aspartyl-tRNA(Asn) + L-glutamine + ATP + H2O = L-asparaginyl-tRNA(Asn) + L-glutamate + ADP + phosphate + 2 H(+)</text>
        <dbReference type="Rhea" id="RHEA:14513"/>
        <dbReference type="Rhea" id="RHEA-COMP:9674"/>
        <dbReference type="Rhea" id="RHEA-COMP:9677"/>
        <dbReference type="ChEBI" id="CHEBI:15377"/>
        <dbReference type="ChEBI" id="CHEBI:15378"/>
        <dbReference type="ChEBI" id="CHEBI:29985"/>
        <dbReference type="ChEBI" id="CHEBI:30616"/>
        <dbReference type="ChEBI" id="CHEBI:43474"/>
        <dbReference type="ChEBI" id="CHEBI:58359"/>
        <dbReference type="ChEBI" id="CHEBI:78515"/>
        <dbReference type="ChEBI" id="CHEBI:78516"/>
        <dbReference type="ChEBI" id="CHEBI:456216"/>
    </reaction>
</comment>
<comment type="subunit">
    <text evidence="1">Heterotrimer of A, B and C subunits.</text>
</comment>
<comment type="similarity">
    <text evidence="1">Belongs to the GatC family.</text>
</comment>
<sequence length="100" mass="10980">MKISEEEVRHVAALSKLSFSESETTEFATTLSKIVDMVELLNEVDTTGVAITTTMADKKNIMRADIAEAGVDRKLLFQNVPEKENHFIKVPAILDDGGDA</sequence>
<organism>
    <name type="scientific">Streptococcus equi subsp. equi (strain 4047)</name>
    <dbReference type="NCBI Taxonomy" id="553482"/>
    <lineage>
        <taxon>Bacteria</taxon>
        <taxon>Bacillati</taxon>
        <taxon>Bacillota</taxon>
        <taxon>Bacilli</taxon>
        <taxon>Lactobacillales</taxon>
        <taxon>Streptococcaceae</taxon>
        <taxon>Streptococcus</taxon>
    </lineage>
</organism>
<accession>C0M7E7</accession>
<name>GATC_STRE4</name>
<dbReference type="EC" id="6.3.5.-" evidence="1"/>
<dbReference type="EMBL" id="FM204883">
    <property type="protein sequence ID" value="CAW92651.1"/>
    <property type="molecule type" value="Genomic_DNA"/>
</dbReference>
<dbReference type="RefSeq" id="WP_012679064.1">
    <property type="nucleotide sequence ID" value="NC_012471.1"/>
</dbReference>
<dbReference type="SMR" id="C0M7E7"/>
<dbReference type="KEGG" id="seu:SEQ_0461"/>
<dbReference type="HOGENOM" id="CLU_105899_1_2_9"/>
<dbReference type="OrthoDB" id="9813938at2"/>
<dbReference type="Proteomes" id="UP000001365">
    <property type="component" value="Chromosome"/>
</dbReference>
<dbReference type="GO" id="GO:0050566">
    <property type="term" value="F:asparaginyl-tRNA synthase (glutamine-hydrolyzing) activity"/>
    <property type="evidence" value="ECO:0007669"/>
    <property type="project" value="RHEA"/>
</dbReference>
<dbReference type="GO" id="GO:0005524">
    <property type="term" value="F:ATP binding"/>
    <property type="evidence" value="ECO:0007669"/>
    <property type="project" value="UniProtKB-KW"/>
</dbReference>
<dbReference type="GO" id="GO:0050567">
    <property type="term" value="F:glutaminyl-tRNA synthase (glutamine-hydrolyzing) activity"/>
    <property type="evidence" value="ECO:0007669"/>
    <property type="project" value="UniProtKB-UniRule"/>
</dbReference>
<dbReference type="GO" id="GO:0070681">
    <property type="term" value="P:glutaminyl-tRNAGln biosynthesis via transamidation"/>
    <property type="evidence" value="ECO:0007669"/>
    <property type="project" value="TreeGrafter"/>
</dbReference>
<dbReference type="GO" id="GO:0006450">
    <property type="term" value="P:regulation of translational fidelity"/>
    <property type="evidence" value="ECO:0007669"/>
    <property type="project" value="InterPro"/>
</dbReference>
<dbReference type="GO" id="GO:0006412">
    <property type="term" value="P:translation"/>
    <property type="evidence" value="ECO:0007669"/>
    <property type="project" value="UniProtKB-UniRule"/>
</dbReference>
<dbReference type="Gene3D" id="1.10.20.60">
    <property type="entry name" value="Glu-tRNAGln amidotransferase C subunit, N-terminal domain"/>
    <property type="match status" value="1"/>
</dbReference>
<dbReference type="HAMAP" id="MF_00122">
    <property type="entry name" value="GatC"/>
    <property type="match status" value="1"/>
</dbReference>
<dbReference type="InterPro" id="IPR036113">
    <property type="entry name" value="Asp/Glu-ADT_sf_sub_c"/>
</dbReference>
<dbReference type="InterPro" id="IPR003837">
    <property type="entry name" value="GatC"/>
</dbReference>
<dbReference type="NCBIfam" id="TIGR00135">
    <property type="entry name" value="gatC"/>
    <property type="match status" value="1"/>
</dbReference>
<dbReference type="PANTHER" id="PTHR15004">
    <property type="entry name" value="GLUTAMYL-TRNA(GLN) AMIDOTRANSFERASE SUBUNIT C, MITOCHONDRIAL"/>
    <property type="match status" value="1"/>
</dbReference>
<dbReference type="PANTHER" id="PTHR15004:SF0">
    <property type="entry name" value="GLUTAMYL-TRNA(GLN) AMIDOTRANSFERASE SUBUNIT C, MITOCHONDRIAL"/>
    <property type="match status" value="1"/>
</dbReference>
<dbReference type="Pfam" id="PF02686">
    <property type="entry name" value="GatC"/>
    <property type="match status" value="1"/>
</dbReference>
<dbReference type="SUPFAM" id="SSF141000">
    <property type="entry name" value="Glu-tRNAGln amidotransferase C subunit"/>
    <property type="match status" value="1"/>
</dbReference>
<keyword id="KW-0067">ATP-binding</keyword>
<keyword id="KW-0436">Ligase</keyword>
<keyword id="KW-0547">Nucleotide-binding</keyword>
<keyword id="KW-0648">Protein biosynthesis</keyword>
<protein>
    <recommendedName>
        <fullName evidence="1">Aspartyl/glutamyl-tRNA(Asn/Gln) amidotransferase subunit C</fullName>
        <shortName evidence="1">Asp/Glu-ADT subunit C</shortName>
        <ecNumber evidence="1">6.3.5.-</ecNumber>
    </recommendedName>
</protein>
<feature type="chain" id="PRO_1000122583" description="Aspartyl/glutamyl-tRNA(Asn/Gln) amidotransferase subunit C">
    <location>
        <begin position="1"/>
        <end position="100"/>
    </location>
</feature>